<feature type="chain" id="PRO_0000368617" description="ATP synthase subunit b">
    <location>
        <begin position="1"/>
        <end position="184"/>
    </location>
</feature>
<feature type="transmembrane region" description="Helical" evidence="1">
    <location>
        <begin position="15"/>
        <end position="34"/>
    </location>
</feature>
<proteinExistence type="inferred from homology"/>
<accession>Q1DF98</accession>
<reference key="1">
    <citation type="journal article" date="2006" name="Proc. Natl. Acad. Sci. U.S.A.">
        <title>Evolution of sensory complexity recorded in a myxobacterial genome.</title>
        <authorList>
            <person name="Goldman B.S."/>
            <person name="Nierman W.C."/>
            <person name="Kaiser D."/>
            <person name="Slater S.C."/>
            <person name="Durkin A.S."/>
            <person name="Eisen J.A."/>
            <person name="Ronning C.M."/>
            <person name="Barbazuk W.B."/>
            <person name="Blanchard M."/>
            <person name="Field C."/>
            <person name="Halling C."/>
            <person name="Hinkle G."/>
            <person name="Iartchuk O."/>
            <person name="Kim H.S."/>
            <person name="Mackenzie C."/>
            <person name="Madupu R."/>
            <person name="Miller N."/>
            <person name="Shvartsbeyn A."/>
            <person name="Sullivan S.A."/>
            <person name="Vaudin M."/>
            <person name="Wiegand R."/>
            <person name="Kaplan H.B."/>
        </authorList>
    </citation>
    <scope>NUCLEOTIDE SEQUENCE [LARGE SCALE GENOMIC DNA]</scope>
    <source>
        <strain>DK1622</strain>
    </source>
</reference>
<keyword id="KW-0066">ATP synthesis</keyword>
<keyword id="KW-0997">Cell inner membrane</keyword>
<keyword id="KW-1003">Cell membrane</keyword>
<keyword id="KW-0138">CF(0)</keyword>
<keyword id="KW-0375">Hydrogen ion transport</keyword>
<keyword id="KW-0406">Ion transport</keyword>
<keyword id="KW-0472">Membrane</keyword>
<keyword id="KW-1185">Reference proteome</keyword>
<keyword id="KW-0812">Transmembrane</keyword>
<keyword id="KW-1133">Transmembrane helix</keyword>
<keyword id="KW-0813">Transport</keyword>
<protein>
    <recommendedName>
        <fullName evidence="1">ATP synthase subunit b</fullName>
    </recommendedName>
    <alternativeName>
        <fullName evidence="1">ATP synthase F(0) sector subunit b</fullName>
    </alternativeName>
    <alternativeName>
        <fullName evidence="1">ATPase subunit I</fullName>
    </alternativeName>
    <alternativeName>
        <fullName evidence="1">F-type ATPase subunit b</fullName>
        <shortName evidence="1">F-ATPase subunit b</shortName>
    </alternativeName>
</protein>
<organism>
    <name type="scientific">Myxococcus xanthus (strain DK1622)</name>
    <dbReference type="NCBI Taxonomy" id="246197"/>
    <lineage>
        <taxon>Bacteria</taxon>
        <taxon>Pseudomonadati</taxon>
        <taxon>Myxococcota</taxon>
        <taxon>Myxococcia</taxon>
        <taxon>Myxococcales</taxon>
        <taxon>Cystobacterineae</taxon>
        <taxon>Myxococcaceae</taxon>
        <taxon>Myxococcus</taxon>
    </lineage>
</organism>
<dbReference type="EMBL" id="CP000113">
    <property type="protein sequence ID" value="ABF89279.1"/>
    <property type="status" value="ALT_INIT"/>
    <property type="molecule type" value="Genomic_DNA"/>
</dbReference>
<dbReference type="RefSeq" id="WP_020478431.1">
    <property type="nucleotide sequence ID" value="NC_008095.1"/>
</dbReference>
<dbReference type="SMR" id="Q1DF98"/>
<dbReference type="STRING" id="246197.MXAN_0404"/>
<dbReference type="EnsemblBacteria" id="ABF89279">
    <property type="protein sequence ID" value="ABF89279"/>
    <property type="gene ID" value="MXAN_0404"/>
</dbReference>
<dbReference type="GeneID" id="41357898"/>
<dbReference type="KEGG" id="mxa:MXAN_0404"/>
<dbReference type="eggNOG" id="COG0711">
    <property type="taxonomic scope" value="Bacteria"/>
</dbReference>
<dbReference type="HOGENOM" id="CLU_079215_4_1_7"/>
<dbReference type="OrthoDB" id="9795289at2"/>
<dbReference type="Proteomes" id="UP000002402">
    <property type="component" value="Chromosome"/>
</dbReference>
<dbReference type="GO" id="GO:0005886">
    <property type="term" value="C:plasma membrane"/>
    <property type="evidence" value="ECO:0007669"/>
    <property type="project" value="UniProtKB-SubCell"/>
</dbReference>
<dbReference type="GO" id="GO:0045259">
    <property type="term" value="C:proton-transporting ATP synthase complex"/>
    <property type="evidence" value="ECO:0007669"/>
    <property type="project" value="UniProtKB-KW"/>
</dbReference>
<dbReference type="GO" id="GO:0046933">
    <property type="term" value="F:proton-transporting ATP synthase activity, rotational mechanism"/>
    <property type="evidence" value="ECO:0007669"/>
    <property type="project" value="UniProtKB-UniRule"/>
</dbReference>
<dbReference type="GO" id="GO:0046961">
    <property type="term" value="F:proton-transporting ATPase activity, rotational mechanism"/>
    <property type="evidence" value="ECO:0007669"/>
    <property type="project" value="TreeGrafter"/>
</dbReference>
<dbReference type="CDD" id="cd06503">
    <property type="entry name" value="ATP-synt_Fo_b"/>
    <property type="match status" value="1"/>
</dbReference>
<dbReference type="HAMAP" id="MF_01398">
    <property type="entry name" value="ATP_synth_b_bprime"/>
    <property type="match status" value="1"/>
</dbReference>
<dbReference type="InterPro" id="IPR002146">
    <property type="entry name" value="ATP_synth_b/b'su_bac/chlpt"/>
</dbReference>
<dbReference type="InterPro" id="IPR005864">
    <property type="entry name" value="ATP_synth_F0_bsu_bac"/>
</dbReference>
<dbReference type="InterPro" id="IPR050059">
    <property type="entry name" value="ATP_synthase_B_chain"/>
</dbReference>
<dbReference type="NCBIfam" id="TIGR01144">
    <property type="entry name" value="ATP_synt_b"/>
    <property type="match status" value="1"/>
</dbReference>
<dbReference type="PANTHER" id="PTHR33445:SF1">
    <property type="entry name" value="ATP SYNTHASE SUBUNIT B"/>
    <property type="match status" value="1"/>
</dbReference>
<dbReference type="PANTHER" id="PTHR33445">
    <property type="entry name" value="ATP SYNTHASE SUBUNIT B', CHLOROPLASTIC"/>
    <property type="match status" value="1"/>
</dbReference>
<dbReference type="Pfam" id="PF00430">
    <property type="entry name" value="ATP-synt_B"/>
    <property type="match status" value="1"/>
</dbReference>
<gene>
    <name evidence="1" type="primary">atpF</name>
    <name type="ordered locus">MXAN_0404</name>
</gene>
<sequence>MFLPSVLAASNLVKVQPGLIFWTLVTFVIAAVVLKWKAWGPILSLVEEREKQIASSIESAKRERAEAEKLLADQKTAIAEARREAAEMMRRNTQEMEKFREELMAKSRKEAEELKLSARREIDEQKAKAIAEVRSMAVDLAMEVAGKLISERMDDSKQRALAEQFVQGLPLNSTSATGAVRRTA</sequence>
<name>ATPF_MYXXD</name>
<comment type="function">
    <text evidence="1">F(1)F(0) ATP synthase produces ATP from ADP in the presence of a proton or sodium gradient. F-type ATPases consist of two structural domains, F(1) containing the extramembraneous catalytic core and F(0) containing the membrane proton channel, linked together by a central stalk and a peripheral stalk. During catalysis, ATP synthesis in the catalytic domain of F(1) is coupled via a rotary mechanism of the central stalk subunits to proton translocation.</text>
</comment>
<comment type="function">
    <text evidence="1">Component of the F(0) channel, it forms part of the peripheral stalk, linking F(1) to F(0).</text>
</comment>
<comment type="subunit">
    <text evidence="1">F-type ATPases have 2 components, F(1) - the catalytic core - and F(0) - the membrane proton channel. F(1) has five subunits: alpha(3), beta(3), gamma(1), delta(1), epsilon(1). F(0) has three main subunits: a(1), b(2) and c(10-14). The alpha and beta chains form an alternating ring which encloses part of the gamma chain. F(1) is attached to F(0) by a central stalk formed by the gamma and epsilon chains, while a peripheral stalk is formed by the delta and b chains.</text>
</comment>
<comment type="subcellular location">
    <subcellularLocation>
        <location evidence="1">Cell inner membrane</location>
        <topology evidence="1">Single-pass membrane protein</topology>
    </subcellularLocation>
</comment>
<comment type="similarity">
    <text evidence="1">Belongs to the ATPase B chain family.</text>
</comment>
<comment type="sequence caution" evidence="2">
    <conflict type="erroneous initiation">
        <sequence resource="EMBL-CDS" id="ABF89279"/>
    </conflict>
</comment>
<evidence type="ECO:0000255" key="1">
    <source>
        <dbReference type="HAMAP-Rule" id="MF_01398"/>
    </source>
</evidence>
<evidence type="ECO:0000305" key="2"/>